<name>FADA_ACIBC</name>
<accession>B2I2J8</accession>
<comment type="function">
    <text evidence="1">Catalyzes the final step of fatty acid oxidation in which acetyl-CoA is released and the CoA ester of a fatty acid two carbons shorter is formed.</text>
</comment>
<comment type="catalytic activity">
    <reaction evidence="1">
        <text>an acyl-CoA + acetyl-CoA = a 3-oxoacyl-CoA + CoA</text>
        <dbReference type="Rhea" id="RHEA:21564"/>
        <dbReference type="ChEBI" id="CHEBI:57287"/>
        <dbReference type="ChEBI" id="CHEBI:57288"/>
        <dbReference type="ChEBI" id="CHEBI:58342"/>
        <dbReference type="ChEBI" id="CHEBI:90726"/>
        <dbReference type="EC" id="2.3.1.16"/>
    </reaction>
</comment>
<comment type="pathway">
    <text evidence="1">Lipid metabolism; fatty acid beta-oxidation.</text>
</comment>
<comment type="subunit">
    <text evidence="1">Heterotetramer of two alpha chains (FadB) and two beta chains (FadA).</text>
</comment>
<comment type="subcellular location">
    <subcellularLocation>
        <location evidence="1">Cytoplasm</location>
    </subcellularLocation>
</comment>
<comment type="similarity">
    <text evidence="1">Belongs to the thiolase-like superfamily. Thiolase family.</text>
</comment>
<sequence length="390" mass="41088">MATLNPRDVVIVDGVRSAMGKSKNGMFRNVRADSLSAELVRALVARNQFDVNEVEDLIWGCVNQTLEQGMNIGRNIGLLAGLPKTVAGQTVNRLCGSSMQAIHTAAAQIATNQGDIFIIGGVEHMGHVGMMHGIDLNPEASKHYAKASNMMGLTAEMLGRMNGITREEQDAFGVESHRRAWAATQEGRFKNEIIGVEGHDANGFKILCDIDEVIRPDANLEAFKALKPVFDPKGGSVTAATSSALSDGASAMLLMSAERAQALGLKPRAVIRSMAVAGCDAAIMGYGPVPATQKALKRAGLSIADIQTVELNEAFAAQGLSVLKGLGLYDKQDIVNLNGGAIALGHPLGCSGARITTTLLNVMEQQDTQIGLATMCIGLGQGIATVIERV</sequence>
<keyword id="KW-0012">Acyltransferase</keyword>
<keyword id="KW-0963">Cytoplasm</keyword>
<keyword id="KW-0276">Fatty acid metabolism</keyword>
<keyword id="KW-0442">Lipid degradation</keyword>
<keyword id="KW-0443">Lipid metabolism</keyword>
<keyword id="KW-0808">Transferase</keyword>
<organism>
    <name type="scientific">Acinetobacter baumannii (strain ACICU)</name>
    <dbReference type="NCBI Taxonomy" id="405416"/>
    <lineage>
        <taxon>Bacteria</taxon>
        <taxon>Pseudomonadati</taxon>
        <taxon>Pseudomonadota</taxon>
        <taxon>Gammaproteobacteria</taxon>
        <taxon>Moraxellales</taxon>
        <taxon>Moraxellaceae</taxon>
        <taxon>Acinetobacter</taxon>
        <taxon>Acinetobacter calcoaceticus/baumannii complex</taxon>
    </lineage>
</organism>
<evidence type="ECO:0000255" key="1">
    <source>
        <dbReference type="HAMAP-Rule" id="MF_01620"/>
    </source>
</evidence>
<reference key="1">
    <citation type="journal article" date="2008" name="Antimicrob. Agents Chemother.">
        <title>Whole-genome pyrosequencing of an epidemic multidrug-resistant Acinetobacter baumannii strain belonging to the European clone II group.</title>
        <authorList>
            <person name="Iacono M."/>
            <person name="Villa L."/>
            <person name="Fortini D."/>
            <person name="Bordoni R."/>
            <person name="Imperi F."/>
            <person name="Bonnal R.J."/>
            <person name="Sicheritz-Ponten T."/>
            <person name="De Bellis G."/>
            <person name="Visca P."/>
            <person name="Cassone A."/>
            <person name="Carattoli A."/>
        </authorList>
    </citation>
    <scope>NUCLEOTIDE SEQUENCE [LARGE SCALE GENOMIC DNA]</scope>
    <source>
        <strain>ACICU</strain>
    </source>
</reference>
<gene>
    <name evidence="1" type="primary">fadA</name>
    <name type="ordered locus">ACICU_00321</name>
</gene>
<proteinExistence type="inferred from homology"/>
<dbReference type="EC" id="2.3.1.16" evidence="1"/>
<dbReference type="EMBL" id="CP000863">
    <property type="protein sequence ID" value="ACC55633.1"/>
    <property type="molecule type" value="Genomic_DNA"/>
</dbReference>
<dbReference type="RefSeq" id="WP_000212712.1">
    <property type="nucleotide sequence ID" value="NZ_CP031380.1"/>
</dbReference>
<dbReference type="SMR" id="B2I2J8"/>
<dbReference type="GeneID" id="92892301"/>
<dbReference type="KEGG" id="abc:ACICU_00321"/>
<dbReference type="HOGENOM" id="CLU_031026_2_2_6"/>
<dbReference type="UniPathway" id="UPA00659"/>
<dbReference type="Proteomes" id="UP000008839">
    <property type="component" value="Chromosome"/>
</dbReference>
<dbReference type="GO" id="GO:0005737">
    <property type="term" value="C:cytoplasm"/>
    <property type="evidence" value="ECO:0007669"/>
    <property type="project" value="UniProtKB-SubCell"/>
</dbReference>
<dbReference type="GO" id="GO:0003988">
    <property type="term" value="F:acetyl-CoA C-acyltransferase activity"/>
    <property type="evidence" value="ECO:0007669"/>
    <property type="project" value="UniProtKB-UniRule"/>
</dbReference>
<dbReference type="GO" id="GO:0006635">
    <property type="term" value="P:fatty acid beta-oxidation"/>
    <property type="evidence" value="ECO:0007669"/>
    <property type="project" value="UniProtKB-UniRule"/>
</dbReference>
<dbReference type="GO" id="GO:0010124">
    <property type="term" value="P:phenylacetate catabolic process"/>
    <property type="evidence" value="ECO:0007669"/>
    <property type="project" value="TreeGrafter"/>
</dbReference>
<dbReference type="CDD" id="cd00751">
    <property type="entry name" value="thiolase"/>
    <property type="match status" value="1"/>
</dbReference>
<dbReference type="FunFam" id="3.40.47.10:FF:000010">
    <property type="entry name" value="Acetyl-CoA acetyltransferase (Thiolase)"/>
    <property type="match status" value="1"/>
</dbReference>
<dbReference type="Gene3D" id="3.40.47.10">
    <property type="match status" value="2"/>
</dbReference>
<dbReference type="HAMAP" id="MF_01620">
    <property type="entry name" value="FadA"/>
    <property type="match status" value="1"/>
</dbReference>
<dbReference type="InterPro" id="IPR012805">
    <property type="entry name" value="FadA"/>
</dbReference>
<dbReference type="InterPro" id="IPR002155">
    <property type="entry name" value="Thiolase"/>
</dbReference>
<dbReference type="InterPro" id="IPR016039">
    <property type="entry name" value="Thiolase-like"/>
</dbReference>
<dbReference type="InterPro" id="IPR050215">
    <property type="entry name" value="Thiolase-like_sf_Thiolase"/>
</dbReference>
<dbReference type="InterPro" id="IPR020615">
    <property type="entry name" value="Thiolase_acyl_enz_int_AS"/>
</dbReference>
<dbReference type="InterPro" id="IPR020610">
    <property type="entry name" value="Thiolase_AS"/>
</dbReference>
<dbReference type="InterPro" id="IPR020617">
    <property type="entry name" value="Thiolase_C"/>
</dbReference>
<dbReference type="InterPro" id="IPR020613">
    <property type="entry name" value="Thiolase_CS"/>
</dbReference>
<dbReference type="InterPro" id="IPR020616">
    <property type="entry name" value="Thiolase_N"/>
</dbReference>
<dbReference type="NCBIfam" id="TIGR01930">
    <property type="entry name" value="AcCoA-C-Actrans"/>
    <property type="match status" value="1"/>
</dbReference>
<dbReference type="NCBIfam" id="TIGR02445">
    <property type="entry name" value="fadA"/>
    <property type="match status" value="1"/>
</dbReference>
<dbReference type="NCBIfam" id="NF006510">
    <property type="entry name" value="PRK08947.1"/>
    <property type="match status" value="1"/>
</dbReference>
<dbReference type="PANTHER" id="PTHR43853:SF11">
    <property type="entry name" value="3-KETOACYL-COA THIOLASE FADA"/>
    <property type="match status" value="1"/>
</dbReference>
<dbReference type="PANTHER" id="PTHR43853">
    <property type="entry name" value="3-KETOACYL-COA THIOLASE, PEROXISOMAL"/>
    <property type="match status" value="1"/>
</dbReference>
<dbReference type="Pfam" id="PF02803">
    <property type="entry name" value="Thiolase_C"/>
    <property type="match status" value="1"/>
</dbReference>
<dbReference type="Pfam" id="PF00108">
    <property type="entry name" value="Thiolase_N"/>
    <property type="match status" value="1"/>
</dbReference>
<dbReference type="PIRSF" id="PIRSF000429">
    <property type="entry name" value="Ac-CoA_Ac_transf"/>
    <property type="match status" value="1"/>
</dbReference>
<dbReference type="SUPFAM" id="SSF53901">
    <property type="entry name" value="Thiolase-like"/>
    <property type="match status" value="2"/>
</dbReference>
<dbReference type="PROSITE" id="PS00098">
    <property type="entry name" value="THIOLASE_1"/>
    <property type="match status" value="1"/>
</dbReference>
<dbReference type="PROSITE" id="PS00737">
    <property type="entry name" value="THIOLASE_2"/>
    <property type="match status" value="1"/>
</dbReference>
<dbReference type="PROSITE" id="PS00099">
    <property type="entry name" value="THIOLASE_3"/>
    <property type="match status" value="1"/>
</dbReference>
<protein>
    <recommendedName>
        <fullName evidence="1">3-ketoacyl-CoA thiolase</fullName>
        <ecNumber evidence="1">2.3.1.16</ecNumber>
    </recommendedName>
    <alternativeName>
        <fullName evidence="1">Acetyl-CoA acyltransferase</fullName>
    </alternativeName>
    <alternativeName>
        <fullName evidence="1">Beta-ketothiolase</fullName>
    </alternativeName>
    <alternativeName>
        <fullName evidence="1">Fatty acid oxidation complex subunit beta</fullName>
    </alternativeName>
</protein>
<feature type="chain" id="PRO_1000186019" description="3-ketoacyl-CoA thiolase">
    <location>
        <begin position="1"/>
        <end position="390"/>
    </location>
</feature>
<feature type="active site" description="Acyl-thioester intermediate" evidence="1">
    <location>
        <position position="95"/>
    </location>
</feature>
<feature type="active site" description="Proton acceptor" evidence="1">
    <location>
        <position position="346"/>
    </location>
</feature>
<feature type="active site" description="Proton acceptor" evidence="1">
    <location>
        <position position="376"/>
    </location>
</feature>